<protein>
    <recommendedName>
        <fullName evidence="1">Protein PsbN</fullName>
    </recommendedName>
</protein>
<gene>
    <name evidence="1" type="primary">psbN</name>
</gene>
<feature type="chain" id="PRO_0000207972" description="Protein PsbN">
    <location>
        <begin position="1"/>
        <end position="43"/>
    </location>
</feature>
<feature type="transmembrane region" description="Helical" evidence="1">
    <location>
        <begin position="5"/>
        <end position="27"/>
    </location>
</feature>
<geneLocation type="chloroplast"/>
<name>PSBN_ZAMFU</name>
<organism>
    <name type="scientific">Zamia furfuracea</name>
    <name type="common">Cardboard cycad</name>
    <name type="synonym">Jamaican sago tree</name>
    <dbReference type="NCBI Taxonomy" id="42329"/>
    <lineage>
        <taxon>Eukaryota</taxon>
        <taxon>Viridiplantae</taxon>
        <taxon>Streptophyta</taxon>
        <taxon>Embryophyta</taxon>
        <taxon>Tracheophyta</taxon>
        <taxon>Spermatophyta</taxon>
        <taxon>Cycadidae</taxon>
        <taxon>Cycadales</taxon>
        <taxon>Zamiaceae</taxon>
        <taxon>Zamia</taxon>
    </lineage>
</organism>
<proteinExistence type="inferred from homology"/>
<sequence>METATLVAISISRLLVSFTGYALYTAFGQPSEQLRDPFEEHED</sequence>
<dbReference type="EMBL" id="AF188846">
    <property type="protein sequence ID" value="AAF73297.1"/>
    <property type="molecule type" value="Genomic_DNA"/>
</dbReference>
<dbReference type="RefSeq" id="YP_009113755.1">
    <property type="nucleotide sequence ID" value="NC_026040.1"/>
</dbReference>
<dbReference type="SMR" id="Q9MSR1"/>
<dbReference type="GeneID" id="22832233"/>
<dbReference type="GO" id="GO:0009535">
    <property type="term" value="C:chloroplast thylakoid membrane"/>
    <property type="evidence" value="ECO:0007669"/>
    <property type="project" value="UniProtKB-SubCell"/>
</dbReference>
<dbReference type="GO" id="GO:0015979">
    <property type="term" value="P:photosynthesis"/>
    <property type="evidence" value="ECO:0007669"/>
    <property type="project" value="InterPro"/>
</dbReference>
<dbReference type="HAMAP" id="MF_00293">
    <property type="entry name" value="PSII_PsbN"/>
    <property type="match status" value="1"/>
</dbReference>
<dbReference type="InterPro" id="IPR003398">
    <property type="entry name" value="PSII_PsbN"/>
</dbReference>
<dbReference type="PANTHER" id="PTHR35326">
    <property type="entry name" value="PROTEIN PSBN"/>
    <property type="match status" value="1"/>
</dbReference>
<dbReference type="PANTHER" id="PTHR35326:SF3">
    <property type="entry name" value="PROTEIN PSBN"/>
    <property type="match status" value="1"/>
</dbReference>
<dbReference type="Pfam" id="PF02468">
    <property type="entry name" value="PsbN"/>
    <property type="match status" value="1"/>
</dbReference>
<comment type="function">
    <text evidence="1">May play a role in photosystem I and II biogenesis.</text>
</comment>
<comment type="subcellular location">
    <subcellularLocation>
        <location evidence="1">Plastid</location>
        <location evidence="1">Chloroplast thylakoid membrane</location>
        <topology evidence="1">Single-pass membrane protein</topology>
    </subcellularLocation>
</comment>
<comment type="similarity">
    <text evidence="1">Belongs to the PsbN family.</text>
</comment>
<comment type="caution">
    <text evidence="1">Originally thought to be a component of PSII; based on experiments in Synechocystis, N.tabacum and barley, and its absence from PSII in T.elongatus and T.vulcanus, this is probably not true.</text>
</comment>
<keyword id="KW-0150">Chloroplast</keyword>
<keyword id="KW-0472">Membrane</keyword>
<keyword id="KW-0934">Plastid</keyword>
<keyword id="KW-0793">Thylakoid</keyword>
<keyword id="KW-0812">Transmembrane</keyword>
<keyword id="KW-1133">Transmembrane helix</keyword>
<evidence type="ECO:0000255" key="1">
    <source>
        <dbReference type="HAMAP-Rule" id="MF_00293"/>
    </source>
</evidence>
<accession>Q9MSR1</accession>
<reference key="1">
    <citation type="journal article" date="2000" name="Curr. Genet.">
        <title>Evolutionary significance of an unusual chloroplast DNA inversion found in two basal angiosperm lineages.</title>
        <authorList>
            <person name="Graham S.W."/>
            <person name="Olmstead R.G."/>
        </authorList>
    </citation>
    <scope>NUCLEOTIDE SEQUENCE [GENOMIC DNA]</scope>
</reference>